<accession>Q2A5F1</accession>
<reference key="1">
    <citation type="submission" date="2006-03" db="EMBL/GenBank/DDBJ databases">
        <title>Complete genome sequence of Francisella tularensis LVS (Live Vaccine Strain).</title>
        <authorList>
            <person name="Chain P."/>
            <person name="Larimer F."/>
            <person name="Land M."/>
            <person name="Stilwagen S."/>
            <person name="Larsson P."/>
            <person name="Bearden S."/>
            <person name="Chu M."/>
            <person name="Oyston P."/>
            <person name="Forsman M."/>
            <person name="Andersson S."/>
            <person name="Lindler L."/>
            <person name="Titball R."/>
            <person name="Garcia E."/>
        </authorList>
    </citation>
    <scope>NUCLEOTIDE SEQUENCE [LARGE SCALE GENOMIC DNA]</scope>
    <source>
        <strain>LVS</strain>
    </source>
</reference>
<sequence>MKLNTLAPAAGSKSAPKRLGRGIGSGLGKTSGKGHKGQKARSGGYHKVGFEGGQMPLQRRLPKFGFPSASKRYVAEIRLHELNNVVADEVTLDTLKDFGLIRKDIKTVKVIASGEIQKAVSLKGIACTKGAKEAIEKAGGKVE</sequence>
<organism>
    <name type="scientific">Francisella tularensis subsp. holarctica (strain LVS)</name>
    <dbReference type="NCBI Taxonomy" id="376619"/>
    <lineage>
        <taxon>Bacteria</taxon>
        <taxon>Pseudomonadati</taxon>
        <taxon>Pseudomonadota</taxon>
        <taxon>Gammaproteobacteria</taxon>
        <taxon>Thiotrichales</taxon>
        <taxon>Francisellaceae</taxon>
        <taxon>Francisella</taxon>
    </lineage>
</organism>
<evidence type="ECO:0000255" key="1">
    <source>
        <dbReference type="HAMAP-Rule" id="MF_01341"/>
    </source>
</evidence>
<evidence type="ECO:0000256" key="2">
    <source>
        <dbReference type="SAM" id="MobiDB-lite"/>
    </source>
</evidence>
<evidence type="ECO:0000305" key="3"/>
<protein>
    <recommendedName>
        <fullName evidence="1">Large ribosomal subunit protein uL15</fullName>
    </recommendedName>
    <alternativeName>
        <fullName evidence="3">50S ribosomal protein L15</fullName>
    </alternativeName>
</protein>
<gene>
    <name evidence="1" type="primary">rplO</name>
    <name type="ordered locus">FTL_0255</name>
</gene>
<proteinExistence type="inferred from homology"/>
<keyword id="KW-1185">Reference proteome</keyword>
<keyword id="KW-0687">Ribonucleoprotein</keyword>
<keyword id="KW-0689">Ribosomal protein</keyword>
<keyword id="KW-0694">RNA-binding</keyword>
<keyword id="KW-0699">rRNA-binding</keyword>
<name>RL15_FRATH</name>
<dbReference type="EMBL" id="AM233362">
    <property type="protein sequence ID" value="CAJ78696.1"/>
    <property type="molecule type" value="Genomic_DNA"/>
</dbReference>
<dbReference type="RefSeq" id="WP_003014365.1">
    <property type="nucleotide sequence ID" value="NZ_CP009694.1"/>
</dbReference>
<dbReference type="SMR" id="Q2A5F1"/>
<dbReference type="KEGG" id="ftl:FTL_0255"/>
<dbReference type="Proteomes" id="UP000001944">
    <property type="component" value="Chromosome"/>
</dbReference>
<dbReference type="GO" id="GO:0022625">
    <property type="term" value="C:cytosolic large ribosomal subunit"/>
    <property type="evidence" value="ECO:0007669"/>
    <property type="project" value="TreeGrafter"/>
</dbReference>
<dbReference type="GO" id="GO:0019843">
    <property type="term" value="F:rRNA binding"/>
    <property type="evidence" value="ECO:0007669"/>
    <property type="project" value="UniProtKB-UniRule"/>
</dbReference>
<dbReference type="GO" id="GO:0003735">
    <property type="term" value="F:structural constituent of ribosome"/>
    <property type="evidence" value="ECO:0007669"/>
    <property type="project" value="InterPro"/>
</dbReference>
<dbReference type="GO" id="GO:0006412">
    <property type="term" value="P:translation"/>
    <property type="evidence" value="ECO:0007669"/>
    <property type="project" value="UniProtKB-UniRule"/>
</dbReference>
<dbReference type="Gene3D" id="3.100.10.10">
    <property type="match status" value="1"/>
</dbReference>
<dbReference type="HAMAP" id="MF_01341">
    <property type="entry name" value="Ribosomal_uL15"/>
    <property type="match status" value="1"/>
</dbReference>
<dbReference type="InterPro" id="IPR030878">
    <property type="entry name" value="Ribosomal_uL15"/>
</dbReference>
<dbReference type="InterPro" id="IPR021131">
    <property type="entry name" value="Ribosomal_uL15/eL18"/>
</dbReference>
<dbReference type="InterPro" id="IPR036227">
    <property type="entry name" value="Ribosomal_uL15/eL18_sf"/>
</dbReference>
<dbReference type="InterPro" id="IPR005749">
    <property type="entry name" value="Ribosomal_uL15_bac-type"/>
</dbReference>
<dbReference type="InterPro" id="IPR001196">
    <property type="entry name" value="Ribosomal_uL15_CS"/>
</dbReference>
<dbReference type="NCBIfam" id="TIGR01071">
    <property type="entry name" value="rplO_bact"/>
    <property type="match status" value="1"/>
</dbReference>
<dbReference type="PANTHER" id="PTHR12934">
    <property type="entry name" value="50S RIBOSOMAL PROTEIN L15"/>
    <property type="match status" value="1"/>
</dbReference>
<dbReference type="PANTHER" id="PTHR12934:SF11">
    <property type="entry name" value="LARGE RIBOSOMAL SUBUNIT PROTEIN UL15M"/>
    <property type="match status" value="1"/>
</dbReference>
<dbReference type="Pfam" id="PF00828">
    <property type="entry name" value="Ribosomal_L27A"/>
    <property type="match status" value="1"/>
</dbReference>
<dbReference type="SUPFAM" id="SSF52080">
    <property type="entry name" value="Ribosomal proteins L15p and L18e"/>
    <property type="match status" value="1"/>
</dbReference>
<dbReference type="PROSITE" id="PS00475">
    <property type="entry name" value="RIBOSOMAL_L15"/>
    <property type="match status" value="1"/>
</dbReference>
<comment type="function">
    <text evidence="1">Binds to the 23S rRNA.</text>
</comment>
<comment type="subunit">
    <text evidence="1">Part of the 50S ribosomal subunit.</text>
</comment>
<comment type="similarity">
    <text evidence="1">Belongs to the universal ribosomal protein uL15 family.</text>
</comment>
<feature type="chain" id="PRO_0000251514" description="Large ribosomal subunit protein uL15">
    <location>
        <begin position="1"/>
        <end position="143"/>
    </location>
</feature>
<feature type="region of interest" description="Disordered" evidence="2">
    <location>
        <begin position="1"/>
        <end position="52"/>
    </location>
</feature>
<feature type="compositionally biased region" description="Gly residues" evidence="2">
    <location>
        <begin position="21"/>
        <end position="31"/>
    </location>
</feature>